<organism>
    <name type="scientific">Shewanella piezotolerans (strain WP3 / JCM 13877)</name>
    <dbReference type="NCBI Taxonomy" id="225849"/>
    <lineage>
        <taxon>Bacteria</taxon>
        <taxon>Pseudomonadati</taxon>
        <taxon>Pseudomonadota</taxon>
        <taxon>Gammaproteobacteria</taxon>
        <taxon>Alteromonadales</taxon>
        <taxon>Shewanellaceae</taxon>
        <taxon>Shewanella</taxon>
    </lineage>
</organism>
<proteinExistence type="inferred from homology"/>
<comment type="subcellular location">
    <subcellularLocation>
        <location>Cytoplasm</location>
    </subcellularLocation>
    <subcellularLocation>
        <location evidence="1">Cell inner membrane</location>
        <topology evidence="1">Peripheral membrane protein</topology>
        <orientation evidence="1">Cytoplasmic side</orientation>
    </subcellularLocation>
</comment>
<comment type="similarity">
    <text evidence="1">Belongs to the HflD family.</text>
</comment>
<evidence type="ECO:0000255" key="1">
    <source>
        <dbReference type="HAMAP-Rule" id="MF_00695"/>
    </source>
</evidence>
<name>HFLD_SHEPW</name>
<feature type="chain" id="PRO_1000132302" description="High frequency lysogenization protein HflD homolog">
    <location>
        <begin position="1"/>
        <end position="205"/>
    </location>
</feature>
<accession>B8CLH3</accession>
<sequence>MSDQLFERTMAFAGILQAVAQVQYIARHGDSDKDALAASLNSVLVTNPDSTSEVYADKEALKKGYQMIVAQLGDGKQKDVEVTRYLVGILALERKLARSANAMGMLSERINQIHRQLSHFEITDEQVIANFAGIYSDIVSELGPKLQISGNPEFLKRTQTQQKIRALLLSAMRSAVLWRQLGGKRRHLVFARKTIVDTAMKSLTL</sequence>
<gene>
    <name evidence="1" type="primary">hflD</name>
    <name type="ordered locus">swp_1862</name>
</gene>
<dbReference type="EMBL" id="CP000472">
    <property type="protein sequence ID" value="ACJ28624.1"/>
    <property type="molecule type" value="Genomic_DNA"/>
</dbReference>
<dbReference type="RefSeq" id="WP_020912002.1">
    <property type="nucleotide sequence ID" value="NC_011566.1"/>
</dbReference>
<dbReference type="SMR" id="B8CLH3"/>
<dbReference type="STRING" id="225849.swp_1862"/>
<dbReference type="KEGG" id="swp:swp_1862"/>
<dbReference type="eggNOG" id="COG2915">
    <property type="taxonomic scope" value="Bacteria"/>
</dbReference>
<dbReference type="HOGENOM" id="CLU_098920_0_0_6"/>
<dbReference type="OrthoDB" id="9788031at2"/>
<dbReference type="Proteomes" id="UP000000753">
    <property type="component" value="Chromosome"/>
</dbReference>
<dbReference type="GO" id="GO:0005737">
    <property type="term" value="C:cytoplasm"/>
    <property type="evidence" value="ECO:0007669"/>
    <property type="project" value="UniProtKB-SubCell"/>
</dbReference>
<dbReference type="GO" id="GO:0005886">
    <property type="term" value="C:plasma membrane"/>
    <property type="evidence" value="ECO:0007669"/>
    <property type="project" value="UniProtKB-SubCell"/>
</dbReference>
<dbReference type="Gene3D" id="1.10.3890.10">
    <property type="entry name" value="HflD-like"/>
    <property type="match status" value="1"/>
</dbReference>
<dbReference type="HAMAP" id="MF_00695">
    <property type="entry name" value="HflD_protein"/>
    <property type="match status" value="1"/>
</dbReference>
<dbReference type="InterPro" id="IPR007451">
    <property type="entry name" value="HflD"/>
</dbReference>
<dbReference type="InterPro" id="IPR035932">
    <property type="entry name" value="HflD-like_sf"/>
</dbReference>
<dbReference type="NCBIfam" id="NF001246">
    <property type="entry name" value="PRK00218.1-2"/>
    <property type="match status" value="1"/>
</dbReference>
<dbReference type="NCBIfam" id="NF001248">
    <property type="entry name" value="PRK00218.1-4"/>
    <property type="match status" value="1"/>
</dbReference>
<dbReference type="PANTHER" id="PTHR38100">
    <property type="entry name" value="HIGH FREQUENCY LYSOGENIZATION PROTEIN HFLD"/>
    <property type="match status" value="1"/>
</dbReference>
<dbReference type="PANTHER" id="PTHR38100:SF1">
    <property type="entry name" value="HIGH FREQUENCY LYSOGENIZATION PROTEIN HFLD"/>
    <property type="match status" value="1"/>
</dbReference>
<dbReference type="Pfam" id="PF04356">
    <property type="entry name" value="DUF489"/>
    <property type="match status" value="1"/>
</dbReference>
<dbReference type="SUPFAM" id="SSF101322">
    <property type="entry name" value="YcfC-like"/>
    <property type="match status" value="1"/>
</dbReference>
<keyword id="KW-0997">Cell inner membrane</keyword>
<keyword id="KW-1003">Cell membrane</keyword>
<keyword id="KW-0963">Cytoplasm</keyword>
<keyword id="KW-0472">Membrane</keyword>
<reference key="1">
    <citation type="journal article" date="2008" name="PLoS ONE">
        <title>Environmental adaptation: genomic analysis of the piezotolerant and psychrotolerant deep-sea iron reducing bacterium Shewanella piezotolerans WP3.</title>
        <authorList>
            <person name="Wang F."/>
            <person name="Wang J."/>
            <person name="Jian H."/>
            <person name="Zhang B."/>
            <person name="Li S."/>
            <person name="Wang F."/>
            <person name="Zeng X."/>
            <person name="Gao L."/>
            <person name="Bartlett D.H."/>
            <person name="Yu J."/>
            <person name="Hu S."/>
            <person name="Xiao X."/>
        </authorList>
    </citation>
    <scope>NUCLEOTIDE SEQUENCE [LARGE SCALE GENOMIC DNA]</scope>
    <source>
        <strain>WP3 / JCM 13877</strain>
    </source>
</reference>
<protein>
    <recommendedName>
        <fullName evidence="1">High frequency lysogenization protein HflD homolog</fullName>
    </recommendedName>
</protein>